<evidence type="ECO:0000255" key="1"/>
<evidence type="ECO:0000255" key="2">
    <source>
        <dbReference type="HAMAP-Rule" id="MF_01072"/>
    </source>
</evidence>
<comment type="function">
    <text evidence="2">Involved in the biosynthesis of osmoregulated periplasmic glucans (OPGs).</text>
</comment>
<comment type="pathway">
    <text evidence="2">Glycan metabolism; osmoregulated periplasmic glucan (OPG) biosynthesis.</text>
</comment>
<comment type="subcellular location">
    <subcellularLocation>
        <location evidence="2">Cell inner membrane</location>
        <topology evidence="2">Multi-pass membrane protein</topology>
    </subcellularLocation>
</comment>
<comment type="similarity">
    <text evidence="2">Belongs to the glycosyltransferase 2 family. OpgH subfamily.</text>
</comment>
<name>OPGH_SALTY</name>
<gene>
    <name evidence="2" type="primary">mdoH</name>
    <name evidence="2" type="synonym">opgH</name>
    <name type="ordered locus">STM1151</name>
</gene>
<feature type="chain" id="PRO_0000210362" description="Glucans biosynthesis glucosyltransferase H">
    <location>
        <begin position="1"/>
        <end position="847"/>
    </location>
</feature>
<feature type="topological domain" description="Cytoplasmic" evidence="1">
    <location>
        <begin position="1"/>
        <end position="138"/>
    </location>
</feature>
<feature type="transmembrane region" description="Helical" evidence="2">
    <location>
        <begin position="139"/>
        <end position="156"/>
    </location>
</feature>
<feature type="topological domain" description="Periplasmic" evidence="1">
    <location>
        <begin position="157"/>
        <end position="193"/>
    </location>
</feature>
<feature type="transmembrane region" description="Helical" evidence="2">
    <location>
        <begin position="194"/>
        <end position="216"/>
    </location>
</feature>
<feature type="topological domain" description="Cytoplasmic" evidence="1">
    <location>
        <begin position="217"/>
        <end position="511"/>
    </location>
</feature>
<feature type="transmembrane region" description="Helical" evidence="2">
    <location>
        <begin position="512"/>
        <end position="534"/>
    </location>
</feature>
<feature type="topological domain" description="Periplasmic" evidence="1">
    <location>
        <begin position="535"/>
        <end position="567"/>
    </location>
</feature>
<feature type="transmembrane region" description="Helical" evidence="2">
    <location>
        <begin position="568"/>
        <end position="590"/>
    </location>
</feature>
<feature type="topological domain" description="Cytoplasmic" evidence="1">
    <location>
        <begin position="591"/>
        <end position="602"/>
    </location>
</feature>
<feature type="transmembrane region" description="Helical" evidence="2">
    <location>
        <begin position="603"/>
        <end position="625"/>
    </location>
</feature>
<feature type="topological domain" description="Periplasmic" evidence="1">
    <location>
        <begin position="626"/>
        <end position="679"/>
    </location>
</feature>
<feature type="transmembrane region" description="Helical" evidence="2">
    <location>
        <begin position="680"/>
        <end position="702"/>
    </location>
</feature>
<feature type="topological domain" description="Cytoplasmic" evidence="1">
    <location>
        <begin position="703"/>
        <end position="847"/>
    </location>
</feature>
<accession>Q8ZQ26</accession>
<proteinExistence type="inferred from homology"/>
<dbReference type="EC" id="2.4.1.-" evidence="2"/>
<dbReference type="EMBL" id="AE006468">
    <property type="protein sequence ID" value="AAL20081.1"/>
    <property type="molecule type" value="Genomic_DNA"/>
</dbReference>
<dbReference type="RefSeq" id="NP_460122.1">
    <property type="nucleotide sequence ID" value="NC_003197.2"/>
</dbReference>
<dbReference type="RefSeq" id="WP_001044610.1">
    <property type="nucleotide sequence ID" value="NC_003197.2"/>
</dbReference>
<dbReference type="STRING" id="99287.STM1151"/>
<dbReference type="CAZy" id="GT2">
    <property type="family name" value="Glycosyltransferase Family 2"/>
</dbReference>
<dbReference type="PaxDb" id="99287-STM1151"/>
<dbReference type="GeneID" id="1252669"/>
<dbReference type="KEGG" id="stm:STM1151"/>
<dbReference type="PATRIC" id="fig|99287.12.peg.1218"/>
<dbReference type="HOGENOM" id="CLU_015730_0_0_6"/>
<dbReference type="OMA" id="HYWQLGE"/>
<dbReference type="PhylomeDB" id="Q8ZQ26"/>
<dbReference type="BioCyc" id="SENT99287:STM1151-MONOMER"/>
<dbReference type="UniPathway" id="UPA00637"/>
<dbReference type="Proteomes" id="UP000001014">
    <property type="component" value="Chromosome"/>
</dbReference>
<dbReference type="GO" id="GO:0005886">
    <property type="term" value="C:plasma membrane"/>
    <property type="evidence" value="ECO:0000318"/>
    <property type="project" value="GO_Central"/>
</dbReference>
<dbReference type="GO" id="GO:0016758">
    <property type="term" value="F:hexosyltransferase activity"/>
    <property type="evidence" value="ECO:0000318"/>
    <property type="project" value="GO_Central"/>
</dbReference>
<dbReference type="GO" id="GO:0009250">
    <property type="term" value="P:glucan biosynthetic process"/>
    <property type="evidence" value="ECO:0007669"/>
    <property type="project" value="UniProtKB-UniRule"/>
</dbReference>
<dbReference type="CDD" id="cd04191">
    <property type="entry name" value="Glucan_BSP_MdoH"/>
    <property type="match status" value="1"/>
</dbReference>
<dbReference type="FunFam" id="3.90.550.10:FF:000047">
    <property type="entry name" value="Glucans biosynthesis glucosyltransferase H"/>
    <property type="match status" value="1"/>
</dbReference>
<dbReference type="Gene3D" id="3.90.550.10">
    <property type="entry name" value="Spore Coat Polysaccharide Biosynthesis Protein SpsA, Chain A"/>
    <property type="match status" value="1"/>
</dbReference>
<dbReference type="HAMAP" id="MF_01072">
    <property type="entry name" value="MdoH_OpgH"/>
    <property type="match status" value="1"/>
</dbReference>
<dbReference type="InterPro" id="IPR023725">
    <property type="entry name" value="Glucans_biosynth_gluTrFase_H"/>
</dbReference>
<dbReference type="InterPro" id="IPR001173">
    <property type="entry name" value="Glyco_trans_2-like"/>
</dbReference>
<dbReference type="InterPro" id="IPR050321">
    <property type="entry name" value="Glycosyltr_2/OpgH_subfam"/>
</dbReference>
<dbReference type="InterPro" id="IPR029044">
    <property type="entry name" value="Nucleotide-diphossugar_trans"/>
</dbReference>
<dbReference type="NCBIfam" id="NF003955">
    <property type="entry name" value="PRK05454.1-1"/>
    <property type="match status" value="1"/>
</dbReference>
<dbReference type="NCBIfam" id="NF003958">
    <property type="entry name" value="PRK05454.2-1"/>
    <property type="match status" value="1"/>
</dbReference>
<dbReference type="NCBIfam" id="NF003962">
    <property type="entry name" value="PRK05454.2-5"/>
    <property type="match status" value="1"/>
</dbReference>
<dbReference type="PANTHER" id="PTHR43867">
    <property type="entry name" value="CELLULOSE SYNTHASE CATALYTIC SUBUNIT A [UDP-FORMING]"/>
    <property type="match status" value="1"/>
</dbReference>
<dbReference type="PANTHER" id="PTHR43867:SF5">
    <property type="entry name" value="GLUCANS BIOSYNTHESIS GLUCOSYLTRANSFERASE H"/>
    <property type="match status" value="1"/>
</dbReference>
<dbReference type="Pfam" id="PF00535">
    <property type="entry name" value="Glycos_transf_2"/>
    <property type="match status" value="1"/>
</dbReference>
<dbReference type="SUPFAM" id="SSF53448">
    <property type="entry name" value="Nucleotide-diphospho-sugar transferases"/>
    <property type="match status" value="1"/>
</dbReference>
<sequence>MNKTTEYIDALLLSEREKAALPKTDIRAVHQALDAEHRTYSREDDSPQGSVKARLEHAWPDSLAKGQLIKDDEGRDQLQAMPKATRSSMFPDPWRTNPVGRFWDRLRGRDVTPRYVSRLTKEEQASEQKWRTVGTIRRYILLILTLAQTVVATWYMKTILPYQGWALINPMDMVGQDIWVSFMQLLPYMLQTGILILFAVLFCWVSAGFWTALMGFLQLLIGRDKYSISASTVGDEPLNPEHRTALIMPICNEDVSRVFAGLRATWESVKATGNAAHFDVYILSDSYNPDICVAEQKAWMELIAEVQGEGQIFYRRRRRRMKRKSGNIDDFCRRWGNQYSYMVVLDADSVMSGECLSGLVRLMEANPNAGIIQSSPKASGMDTLYARCQQFATRVYGPLFTAGLHFWQLGESHYWGHNAIIRVKPFIEHCALAPLPGEGSFAGSILSHDFVEAALMRRAGWGVWIAYDLPGSYEELPPNLLDELKRDRRWCHGNLMNFRLFLVKGMHPVHRAVFLTGVMSYLSAPLWFMFLALSTALQVVHALTEPQYFLQPRQLFPVWPQWRPELAIALFASTMVLLFLPKLLSIMLIWCKGTKEYGGFWRVTLSLLLEVLFSVLLAPVRMLFHTVFVVSAFLGWEVVWNSPQRDDDSTPWGEAFMRHGSQLLLGLVWAVGMAWLDLRFLFWLAPIVFSLILSPFVSVISSRSTVGLRTKRWKLFLIPEEYSPPQVLVDTDKYLEMNRRRILDDGFMHAVFNPSLNALATAMATARHRASKVLEIARDRHVEQALNETPEKLNRDRRLVLLSDPVTMARLHYRVWNAPERYSSWVNHYQSLVLNPQALQGRTSSAR</sequence>
<protein>
    <recommendedName>
        <fullName evidence="2">Glucans biosynthesis glucosyltransferase H</fullName>
        <ecNumber evidence="2">2.4.1.-</ecNumber>
    </recommendedName>
</protein>
<keyword id="KW-0997">Cell inner membrane</keyword>
<keyword id="KW-1003">Cell membrane</keyword>
<keyword id="KW-0328">Glycosyltransferase</keyword>
<keyword id="KW-0472">Membrane</keyword>
<keyword id="KW-1185">Reference proteome</keyword>
<keyword id="KW-0808">Transferase</keyword>
<keyword id="KW-0812">Transmembrane</keyword>
<keyword id="KW-1133">Transmembrane helix</keyword>
<organism>
    <name type="scientific">Salmonella typhimurium (strain LT2 / SGSC1412 / ATCC 700720)</name>
    <dbReference type="NCBI Taxonomy" id="99287"/>
    <lineage>
        <taxon>Bacteria</taxon>
        <taxon>Pseudomonadati</taxon>
        <taxon>Pseudomonadota</taxon>
        <taxon>Gammaproteobacteria</taxon>
        <taxon>Enterobacterales</taxon>
        <taxon>Enterobacteriaceae</taxon>
        <taxon>Salmonella</taxon>
    </lineage>
</organism>
<reference key="1">
    <citation type="journal article" date="2001" name="Nature">
        <title>Complete genome sequence of Salmonella enterica serovar Typhimurium LT2.</title>
        <authorList>
            <person name="McClelland M."/>
            <person name="Sanderson K.E."/>
            <person name="Spieth J."/>
            <person name="Clifton S.W."/>
            <person name="Latreille P."/>
            <person name="Courtney L."/>
            <person name="Porwollik S."/>
            <person name="Ali J."/>
            <person name="Dante M."/>
            <person name="Du F."/>
            <person name="Hou S."/>
            <person name="Layman D."/>
            <person name="Leonard S."/>
            <person name="Nguyen C."/>
            <person name="Scott K."/>
            <person name="Holmes A."/>
            <person name="Grewal N."/>
            <person name="Mulvaney E."/>
            <person name="Ryan E."/>
            <person name="Sun H."/>
            <person name="Florea L."/>
            <person name="Miller W."/>
            <person name="Stoneking T."/>
            <person name="Nhan M."/>
            <person name="Waterston R."/>
            <person name="Wilson R.K."/>
        </authorList>
    </citation>
    <scope>NUCLEOTIDE SEQUENCE [LARGE SCALE GENOMIC DNA]</scope>
    <source>
        <strain>LT2 / SGSC1412 / ATCC 700720</strain>
    </source>
</reference>